<proteinExistence type="inferred from homology"/>
<evidence type="ECO:0000250" key="1"/>
<evidence type="ECO:0000255" key="2">
    <source>
        <dbReference type="HAMAP-Rule" id="MF_00444"/>
    </source>
</evidence>
<sequence>MPEGEMMHKLQDVIDRKLLDSRRIFFSEPVTEKSATEAIKKLWYLELTNPGQPIVFVINSPGGSVDAGFAVWDQIKMISSPLTTVVTGLAASMGSVLSLCAVPGRRFATPHARIMIHQPSIGGTITGQATDLDIHAREILKTKARIIDVYVEATGQSREVIEKAIDRDMWMSANEAMEFGLLDGILFSFNDL</sequence>
<dbReference type="EC" id="3.4.21.92" evidence="2"/>
<dbReference type="EMBL" id="AE001273">
    <property type="protein sequence ID" value="AAC68028.1"/>
    <property type="molecule type" value="Genomic_DNA"/>
</dbReference>
<dbReference type="PIR" id="G71516">
    <property type="entry name" value="G71516"/>
</dbReference>
<dbReference type="RefSeq" id="WP_009871785.1">
    <property type="nucleotide sequence ID" value="NC_000117.1"/>
</dbReference>
<dbReference type="SMR" id="P38002"/>
<dbReference type="STRING" id="272561.CT_431"/>
<dbReference type="MEROPS" id="S14.005"/>
<dbReference type="EnsemblBacteria" id="AAC68028">
    <property type="protein sequence ID" value="AAC68028"/>
    <property type="gene ID" value="CT_431"/>
</dbReference>
<dbReference type="KEGG" id="ctr:CT_431"/>
<dbReference type="PATRIC" id="fig|272561.5.peg.466"/>
<dbReference type="HOGENOM" id="CLU_058707_4_0_0"/>
<dbReference type="InParanoid" id="P38002"/>
<dbReference type="OrthoDB" id="20499at2"/>
<dbReference type="BRENDA" id="3.4.21.92">
    <property type="organism ID" value="1315"/>
</dbReference>
<dbReference type="Proteomes" id="UP000000431">
    <property type="component" value="Chromosome"/>
</dbReference>
<dbReference type="GO" id="GO:0005737">
    <property type="term" value="C:cytoplasm"/>
    <property type="evidence" value="ECO:0007669"/>
    <property type="project" value="UniProtKB-SubCell"/>
</dbReference>
<dbReference type="GO" id="GO:0009368">
    <property type="term" value="C:endopeptidase Clp complex"/>
    <property type="evidence" value="ECO:0000318"/>
    <property type="project" value="GO_Central"/>
</dbReference>
<dbReference type="GO" id="GO:0004176">
    <property type="term" value="F:ATP-dependent peptidase activity"/>
    <property type="evidence" value="ECO:0000318"/>
    <property type="project" value="GO_Central"/>
</dbReference>
<dbReference type="GO" id="GO:0051117">
    <property type="term" value="F:ATPase binding"/>
    <property type="evidence" value="ECO:0000318"/>
    <property type="project" value="GO_Central"/>
</dbReference>
<dbReference type="GO" id="GO:0004252">
    <property type="term" value="F:serine-type endopeptidase activity"/>
    <property type="evidence" value="ECO:0000318"/>
    <property type="project" value="GO_Central"/>
</dbReference>
<dbReference type="GO" id="GO:0006515">
    <property type="term" value="P:protein quality control for misfolded or incompletely synthesized proteins"/>
    <property type="evidence" value="ECO:0000318"/>
    <property type="project" value="GO_Central"/>
</dbReference>
<dbReference type="CDD" id="cd07017">
    <property type="entry name" value="S14_ClpP_2"/>
    <property type="match status" value="1"/>
</dbReference>
<dbReference type="FunFam" id="3.90.226.10:FF:000055">
    <property type="entry name" value="ATP-dependent Clp protease proteolytic subunit"/>
    <property type="match status" value="1"/>
</dbReference>
<dbReference type="Gene3D" id="3.90.226.10">
    <property type="entry name" value="2-enoyl-CoA Hydratase, Chain A, domain 1"/>
    <property type="match status" value="1"/>
</dbReference>
<dbReference type="HAMAP" id="MF_00444">
    <property type="entry name" value="ClpP"/>
    <property type="match status" value="1"/>
</dbReference>
<dbReference type="InterPro" id="IPR001907">
    <property type="entry name" value="ClpP"/>
</dbReference>
<dbReference type="InterPro" id="IPR029045">
    <property type="entry name" value="ClpP/crotonase-like_dom_sf"/>
</dbReference>
<dbReference type="InterPro" id="IPR023562">
    <property type="entry name" value="ClpP/TepA"/>
</dbReference>
<dbReference type="InterPro" id="IPR033135">
    <property type="entry name" value="ClpP_His_AS"/>
</dbReference>
<dbReference type="NCBIfam" id="NF009205">
    <property type="entry name" value="PRK12553.1"/>
    <property type="match status" value="1"/>
</dbReference>
<dbReference type="PANTHER" id="PTHR10381">
    <property type="entry name" value="ATP-DEPENDENT CLP PROTEASE PROTEOLYTIC SUBUNIT"/>
    <property type="match status" value="1"/>
</dbReference>
<dbReference type="PANTHER" id="PTHR10381:SF11">
    <property type="entry name" value="ATP-DEPENDENT CLP PROTEASE PROTEOLYTIC SUBUNIT, MITOCHONDRIAL"/>
    <property type="match status" value="1"/>
</dbReference>
<dbReference type="Pfam" id="PF00574">
    <property type="entry name" value="CLP_protease"/>
    <property type="match status" value="1"/>
</dbReference>
<dbReference type="PRINTS" id="PR00127">
    <property type="entry name" value="CLPPROTEASEP"/>
</dbReference>
<dbReference type="SUPFAM" id="SSF52096">
    <property type="entry name" value="ClpP/crotonase"/>
    <property type="match status" value="1"/>
</dbReference>
<dbReference type="PROSITE" id="PS00382">
    <property type="entry name" value="CLP_PROTEASE_HIS"/>
    <property type="match status" value="1"/>
</dbReference>
<organism>
    <name type="scientific">Chlamydia trachomatis serovar D (strain ATCC VR-885 / DSM 19411 / UW-3/Cx)</name>
    <dbReference type="NCBI Taxonomy" id="272561"/>
    <lineage>
        <taxon>Bacteria</taxon>
        <taxon>Pseudomonadati</taxon>
        <taxon>Chlamydiota</taxon>
        <taxon>Chlamydiia</taxon>
        <taxon>Chlamydiales</taxon>
        <taxon>Chlamydiaceae</taxon>
        <taxon>Chlamydia/Chlamydophila group</taxon>
        <taxon>Chlamydia</taxon>
    </lineage>
</organism>
<name>CLPP1_CHLTR</name>
<comment type="function">
    <text evidence="2">Cleaves peptides in various proteins in a process that requires ATP hydrolysis. Has a chymotrypsin-like activity. Plays a major role in the degradation of misfolded proteins.</text>
</comment>
<comment type="catalytic activity">
    <reaction evidence="2">
        <text>Hydrolysis of proteins to small peptides in the presence of ATP and magnesium. alpha-casein is the usual test substrate. In the absence of ATP, only oligopeptides shorter than five residues are hydrolyzed (such as succinyl-Leu-Tyr-|-NHMec, and Leu-Tyr-Leu-|-Tyr-Trp, in which cleavage of the -Tyr-|-Leu- and -Tyr-|-Trp bonds also occurs).</text>
        <dbReference type="EC" id="3.4.21.92"/>
    </reaction>
</comment>
<comment type="subunit">
    <text evidence="2">Fourteen ClpP subunits assemble into 2 heptameric rings which stack back to back to give a disk-like structure with a central cavity, resembling the structure of eukaryotic proteasomes.</text>
</comment>
<comment type="subcellular location">
    <subcellularLocation>
        <location evidence="2">Cytoplasm</location>
    </subcellularLocation>
</comment>
<comment type="similarity">
    <text evidence="2">Belongs to the peptidase S14 family.</text>
</comment>
<feature type="initiator methionine" description="Removed" evidence="1">
    <location>
        <position position="1"/>
    </location>
</feature>
<feature type="chain" id="PRO_0000179535" description="ATP-dependent Clp protease proteolytic subunit 1">
    <location>
        <begin position="2"/>
        <end position="192"/>
    </location>
</feature>
<feature type="active site" description="Nucleophile" evidence="2">
    <location>
        <position position="92"/>
    </location>
</feature>
<feature type="active site" evidence="2">
    <location>
        <position position="117"/>
    </location>
</feature>
<reference key="1">
    <citation type="journal article" date="1998" name="Science">
        <title>Genome sequence of an obligate intracellular pathogen of humans: Chlamydia trachomatis.</title>
        <authorList>
            <person name="Stephens R.S."/>
            <person name="Kalman S."/>
            <person name="Lammel C.J."/>
            <person name="Fan J."/>
            <person name="Marathe R."/>
            <person name="Aravind L."/>
            <person name="Mitchell W.P."/>
            <person name="Olinger L."/>
            <person name="Tatusov R.L."/>
            <person name="Zhao Q."/>
            <person name="Koonin E.V."/>
            <person name="Davis R.W."/>
        </authorList>
    </citation>
    <scope>NUCLEOTIDE SEQUENCE [LARGE SCALE GENOMIC DNA]</scope>
    <source>
        <strain>ATCC VR-885 / DSM 19411 / UW-3/Cx</strain>
    </source>
</reference>
<gene>
    <name evidence="2" type="primary">clpP1</name>
    <name type="ordered locus">CT_431</name>
</gene>
<accession>P38002</accession>
<accession>O84438</accession>
<protein>
    <recommendedName>
        <fullName evidence="2">ATP-dependent Clp protease proteolytic subunit 1</fullName>
        <ecNumber evidence="2">3.4.21.92</ecNumber>
    </recommendedName>
    <alternativeName>
        <fullName evidence="2">Endopeptidase Clp 1</fullName>
    </alternativeName>
</protein>
<keyword id="KW-0963">Cytoplasm</keyword>
<keyword id="KW-0378">Hydrolase</keyword>
<keyword id="KW-0645">Protease</keyword>
<keyword id="KW-1185">Reference proteome</keyword>
<keyword id="KW-0720">Serine protease</keyword>